<feature type="chain" id="PRO_1000132574" description="Adenosylcobinamide-GDP ribazoletransferase">
    <location>
        <begin position="1"/>
        <end position="247"/>
    </location>
</feature>
<feature type="transmembrane region" description="Helical" evidence="1">
    <location>
        <begin position="34"/>
        <end position="54"/>
    </location>
</feature>
<feature type="transmembrane region" description="Helical" evidence="1">
    <location>
        <begin position="59"/>
        <end position="79"/>
    </location>
</feature>
<feature type="transmembrane region" description="Helical" evidence="1">
    <location>
        <begin position="113"/>
        <end position="133"/>
    </location>
</feature>
<feature type="transmembrane region" description="Helical" evidence="1">
    <location>
        <begin position="138"/>
        <end position="158"/>
    </location>
</feature>
<feature type="transmembrane region" description="Helical" evidence="1">
    <location>
        <begin position="194"/>
        <end position="214"/>
    </location>
</feature>
<keyword id="KW-0997">Cell inner membrane</keyword>
<keyword id="KW-1003">Cell membrane</keyword>
<keyword id="KW-0169">Cobalamin biosynthesis</keyword>
<keyword id="KW-0460">Magnesium</keyword>
<keyword id="KW-0472">Membrane</keyword>
<keyword id="KW-1185">Reference proteome</keyword>
<keyword id="KW-0808">Transferase</keyword>
<keyword id="KW-0812">Transmembrane</keyword>
<keyword id="KW-1133">Transmembrane helix</keyword>
<protein>
    <recommendedName>
        <fullName evidence="1">Adenosylcobinamide-GDP ribazoletransferase</fullName>
        <ecNumber evidence="1">2.7.8.26</ecNumber>
    </recommendedName>
    <alternativeName>
        <fullName evidence="1">Cobalamin synthase</fullName>
    </alternativeName>
    <alternativeName>
        <fullName evidence="1">Cobalamin-5'-phosphate synthase</fullName>
    </alternativeName>
</protein>
<name>COBS_ECO45</name>
<organism>
    <name type="scientific">Escherichia coli O45:K1 (strain S88 / ExPEC)</name>
    <dbReference type="NCBI Taxonomy" id="585035"/>
    <lineage>
        <taxon>Bacteria</taxon>
        <taxon>Pseudomonadati</taxon>
        <taxon>Pseudomonadota</taxon>
        <taxon>Gammaproteobacteria</taxon>
        <taxon>Enterobacterales</taxon>
        <taxon>Enterobacteriaceae</taxon>
        <taxon>Escherichia</taxon>
    </lineage>
</organism>
<accession>B7MDB8</accession>
<sequence length="247" mass="26410">MSKLFWAMLSFITRLPVPRRWSQGLDFEHYSRGIITFPLIGLLLGAISGLVFMVLQAWCGAPLAALFSVLVLVLMTGGFHLDGLADTCDGVFSARSRDRMLEIMRDSRLGTHGGLALIFVVLAKILVLSELALRGEPILASLAAACAISRGTAALLMYRHRYAREEGLGNVFIGKIDGRQTCVTLGLAAIFAAVLLPGMHGVAAMVVTMVAIFILGQLLKRTLGGQTGDTLGAAIELGELVFLLALL</sequence>
<evidence type="ECO:0000255" key="1">
    <source>
        <dbReference type="HAMAP-Rule" id="MF_00719"/>
    </source>
</evidence>
<proteinExistence type="inferred from homology"/>
<comment type="function">
    <text evidence="1">Joins adenosylcobinamide-GDP and alpha-ribazole to generate adenosylcobalamin (Ado-cobalamin). Also synthesizes adenosylcobalamin 5'-phosphate from adenosylcobinamide-GDP and alpha-ribazole 5'-phosphate.</text>
</comment>
<comment type="catalytic activity">
    <reaction evidence="1">
        <text>alpha-ribazole + adenosylcob(III)inamide-GDP = adenosylcob(III)alamin + GMP + H(+)</text>
        <dbReference type="Rhea" id="RHEA:16049"/>
        <dbReference type="ChEBI" id="CHEBI:10329"/>
        <dbReference type="ChEBI" id="CHEBI:15378"/>
        <dbReference type="ChEBI" id="CHEBI:18408"/>
        <dbReference type="ChEBI" id="CHEBI:58115"/>
        <dbReference type="ChEBI" id="CHEBI:60487"/>
        <dbReference type="EC" id="2.7.8.26"/>
    </reaction>
</comment>
<comment type="catalytic activity">
    <reaction evidence="1">
        <text>alpha-ribazole 5'-phosphate + adenosylcob(III)inamide-GDP = adenosylcob(III)alamin 5'-phosphate + GMP + H(+)</text>
        <dbReference type="Rhea" id="RHEA:23560"/>
        <dbReference type="ChEBI" id="CHEBI:15378"/>
        <dbReference type="ChEBI" id="CHEBI:57918"/>
        <dbReference type="ChEBI" id="CHEBI:58115"/>
        <dbReference type="ChEBI" id="CHEBI:60487"/>
        <dbReference type="ChEBI" id="CHEBI:60493"/>
        <dbReference type="EC" id="2.7.8.26"/>
    </reaction>
</comment>
<comment type="cofactor">
    <cofactor evidence="1">
        <name>Mg(2+)</name>
        <dbReference type="ChEBI" id="CHEBI:18420"/>
    </cofactor>
</comment>
<comment type="pathway">
    <text evidence="1">Cofactor biosynthesis; adenosylcobalamin biosynthesis; adenosylcobalamin from cob(II)yrinate a,c-diamide: step 7/7.</text>
</comment>
<comment type="subcellular location">
    <subcellularLocation>
        <location evidence="1">Cell inner membrane</location>
        <topology evidence="1">Multi-pass membrane protein</topology>
    </subcellularLocation>
</comment>
<comment type="similarity">
    <text evidence="1">Belongs to the CobS family.</text>
</comment>
<reference key="1">
    <citation type="journal article" date="2009" name="PLoS Genet.">
        <title>Organised genome dynamics in the Escherichia coli species results in highly diverse adaptive paths.</title>
        <authorList>
            <person name="Touchon M."/>
            <person name="Hoede C."/>
            <person name="Tenaillon O."/>
            <person name="Barbe V."/>
            <person name="Baeriswyl S."/>
            <person name="Bidet P."/>
            <person name="Bingen E."/>
            <person name="Bonacorsi S."/>
            <person name="Bouchier C."/>
            <person name="Bouvet O."/>
            <person name="Calteau A."/>
            <person name="Chiapello H."/>
            <person name="Clermont O."/>
            <person name="Cruveiller S."/>
            <person name="Danchin A."/>
            <person name="Diard M."/>
            <person name="Dossat C."/>
            <person name="Karoui M.E."/>
            <person name="Frapy E."/>
            <person name="Garry L."/>
            <person name="Ghigo J.M."/>
            <person name="Gilles A.M."/>
            <person name="Johnson J."/>
            <person name="Le Bouguenec C."/>
            <person name="Lescat M."/>
            <person name="Mangenot S."/>
            <person name="Martinez-Jehanne V."/>
            <person name="Matic I."/>
            <person name="Nassif X."/>
            <person name="Oztas S."/>
            <person name="Petit M.A."/>
            <person name="Pichon C."/>
            <person name="Rouy Z."/>
            <person name="Ruf C.S."/>
            <person name="Schneider D."/>
            <person name="Tourret J."/>
            <person name="Vacherie B."/>
            <person name="Vallenet D."/>
            <person name="Medigue C."/>
            <person name="Rocha E.P.C."/>
            <person name="Denamur E."/>
        </authorList>
    </citation>
    <scope>NUCLEOTIDE SEQUENCE [LARGE SCALE GENOMIC DNA]</scope>
    <source>
        <strain>S88 / ExPEC</strain>
    </source>
</reference>
<gene>
    <name evidence="1" type="primary">cobS</name>
    <name type="ordered locus">ECS88_2057</name>
</gene>
<dbReference type="EC" id="2.7.8.26" evidence="1"/>
<dbReference type="EMBL" id="CU928161">
    <property type="protein sequence ID" value="CAR03350.1"/>
    <property type="molecule type" value="Genomic_DNA"/>
</dbReference>
<dbReference type="RefSeq" id="WP_001333061.1">
    <property type="nucleotide sequence ID" value="NC_011742.1"/>
</dbReference>
<dbReference type="KEGG" id="ecz:ECS88_2057"/>
<dbReference type="HOGENOM" id="CLU_057426_1_1_6"/>
<dbReference type="UniPathway" id="UPA00148">
    <property type="reaction ID" value="UER00238"/>
</dbReference>
<dbReference type="Proteomes" id="UP000000747">
    <property type="component" value="Chromosome"/>
</dbReference>
<dbReference type="GO" id="GO:0005886">
    <property type="term" value="C:plasma membrane"/>
    <property type="evidence" value="ECO:0007669"/>
    <property type="project" value="UniProtKB-SubCell"/>
</dbReference>
<dbReference type="GO" id="GO:0051073">
    <property type="term" value="F:adenosylcobinamide-GDP ribazoletransferase activity"/>
    <property type="evidence" value="ECO:0007669"/>
    <property type="project" value="UniProtKB-UniRule"/>
</dbReference>
<dbReference type="GO" id="GO:0008818">
    <property type="term" value="F:cobalamin 5'-phosphate synthase activity"/>
    <property type="evidence" value="ECO:0007669"/>
    <property type="project" value="UniProtKB-UniRule"/>
</dbReference>
<dbReference type="GO" id="GO:0009236">
    <property type="term" value="P:cobalamin biosynthetic process"/>
    <property type="evidence" value="ECO:0007669"/>
    <property type="project" value="UniProtKB-UniRule"/>
</dbReference>
<dbReference type="HAMAP" id="MF_00719">
    <property type="entry name" value="CobS"/>
    <property type="match status" value="1"/>
</dbReference>
<dbReference type="InterPro" id="IPR003805">
    <property type="entry name" value="CobS"/>
</dbReference>
<dbReference type="NCBIfam" id="TIGR00317">
    <property type="entry name" value="cobS"/>
    <property type="match status" value="1"/>
</dbReference>
<dbReference type="PANTHER" id="PTHR34148">
    <property type="entry name" value="ADENOSYLCOBINAMIDE-GDP RIBAZOLETRANSFERASE"/>
    <property type="match status" value="1"/>
</dbReference>
<dbReference type="PANTHER" id="PTHR34148:SF1">
    <property type="entry name" value="ADENOSYLCOBINAMIDE-GDP RIBAZOLETRANSFERASE"/>
    <property type="match status" value="1"/>
</dbReference>
<dbReference type="Pfam" id="PF02654">
    <property type="entry name" value="CobS"/>
    <property type="match status" value="1"/>
</dbReference>